<comment type="function">
    <text evidence="1">Anaerobic nitric oxide reductase; uses NADH to detoxify nitric oxide (NO), protecting several 4Fe-4S NO-sensitive enzymes. Has at least 2 reductase partners, only one of which (NorW, flavorubredoxin reductase) has been identified. NO probably binds to the di-iron center; electrons enter from the NorW at rubredoxin and are transferred sequentially to the FMN center and the di-iron center. Also able to function as an aerobic oxygen reductase.</text>
</comment>
<comment type="cofactor">
    <cofactor evidence="1">
        <name>Fe cation</name>
        <dbReference type="ChEBI" id="CHEBI:24875"/>
    </cofactor>
    <text evidence="1">Binds 3 Fe cations per monomer.</text>
</comment>
<comment type="cofactor">
    <cofactor evidence="1">
        <name>FMN</name>
        <dbReference type="ChEBI" id="CHEBI:58210"/>
    </cofactor>
    <text evidence="1">Binds 1 FMN per monomer.</text>
</comment>
<comment type="pathway">
    <text evidence="1">Nitrogen metabolism; nitric oxide reduction.</text>
</comment>
<comment type="subunit">
    <text evidence="1">Homotetramer.</text>
</comment>
<comment type="subcellular location">
    <subcellularLocation>
        <location evidence="1">Cytoplasm</location>
    </subcellularLocation>
</comment>
<comment type="similarity">
    <text evidence="1">In the N-terminal section; belongs to the zinc metallo-hydrolase group 3 family.</text>
</comment>
<dbReference type="EMBL" id="CP000026">
    <property type="protein sequence ID" value="AAV78555.1"/>
    <property type="molecule type" value="Genomic_DNA"/>
</dbReference>
<dbReference type="RefSeq" id="WP_000026016.1">
    <property type="nucleotide sequence ID" value="NC_006511.1"/>
</dbReference>
<dbReference type="SMR" id="Q5PF19"/>
<dbReference type="KEGG" id="spt:SPA2698"/>
<dbReference type="HOGENOM" id="CLU_017490_0_1_6"/>
<dbReference type="UniPathway" id="UPA00638"/>
<dbReference type="Proteomes" id="UP000008185">
    <property type="component" value="Chromosome"/>
</dbReference>
<dbReference type="GO" id="GO:0005737">
    <property type="term" value="C:cytoplasm"/>
    <property type="evidence" value="ECO:0007669"/>
    <property type="project" value="UniProtKB-SubCell"/>
</dbReference>
<dbReference type="GO" id="GO:0009055">
    <property type="term" value="F:electron transfer activity"/>
    <property type="evidence" value="ECO:0007669"/>
    <property type="project" value="UniProtKB-UniRule"/>
</dbReference>
<dbReference type="GO" id="GO:0010181">
    <property type="term" value="F:FMN binding"/>
    <property type="evidence" value="ECO:0007669"/>
    <property type="project" value="InterPro"/>
</dbReference>
<dbReference type="GO" id="GO:0005506">
    <property type="term" value="F:iron ion binding"/>
    <property type="evidence" value="ECO:0007669"/>
    <property type="project" value="InterPro"/>
</dbReference>
<dbReference type="GO" id="GO:0016966">
    <property type="term" value="F:nitric oxide reductase activity"/>
    <property type="evidence" value="ECO:0007669"/>
    <property type="project" value="InterPro"/>
</dbReference>
<dbReference type="CDD" id="cd07709">
    <property type="entry name" value="flavodiiron_proteins_MBL-fold"/>
    <property type="match status" value="1"/>
</dbReference>
<dbReference type="CDD" id="cd00730">
    <property type="entry name" value="rubredoxin"/>
    <property type="match status" value="1"/>
</dbReference>
<dbReference type="FunFam" id="3.40.50.360:FF:000012">
    <property type="entry name" value="Anaerobic nitric oxide reductase flavorubredoxin"/>
    <property type="match status" value="1"/>
</dbReference>
<dbReference type="FunFam" id="3.60.15.10:FF:000009">
    <property type="entry name" value="Anaerobic nitric oxide reductase flavorubredoxin"/>
    <property type="match status" value="1"/>
</dbReference>
<dbReference type="Gene3D" id="2.20.28.10">
    <property type="match status" value="1"/>
</dbReference>
<dbReference type="Gene3D" id="3.40.50.360">
    <property type="match status" value="1"/>
</dbReference>
<dbReference type="Gene3D" id="3.60.15.10">
    <property type="entry name" value="Ribonuclease Z/Hydroxyacylglutathione hydrolase-like"/>
    <property type="match status" value="1"/>
</dbReference>
<dbReference type="HAMAP" id="MF_01312">
    <property type="entry name" value="NorV"/>
    <property type="match status" value="1"/>
</dbReference>
<dbReference type="InterPro" id="IPR023957">
    <property type="entry name" value="Anaer_NO_rdtase_flvorubredoxin"/>
</dbReference>
<dbReference type="InterPro" id="IPR008254">
    <property type="entry name" value="Flavodoxin/NO_synth"/>
</dbReference>
<dbReference type="InterPro" id="IPR029039">
    <property type="entry name" value="Flavoprotein-like_sf"/>
</dbReference>
<dbReference type="InterPro" id="IPR001279">
    <property type="entry name" value="Metallo-B-lactamas"/>
</dbReference>
<dbReference type="InterPro" id="IPR045761">
    <property type="entry name" value="ODP_dom"/>
</dbReference>
<dbReference type="InterPro" id="IPR036866">
    <property type="entry name" value="RibonucZ/Hydroxyglut_hydro"/>
</dbReference>
<dbReference type="InterPro" id="IPR024934">
    <property type="entry name" value="Rubredoxin-like_dom"/>
</dbReference>
<dbReference type="InterPro" id="IPR016440">
    <property type="entry name" value="Rubredoxin-O_OxRdtase"/>
</dbReference>
<dbReference type="InterPro" id="IPR024935">
    <property type="entry name" value="Rubredoxin_dom"/>
</dbReference>
<dbReference type="NCBIfam" id="NF003954">
    <property type="entry name" value="PRK05452.1"/>
    <property type="match status" value="1"/>
</dbReference>
<dbReference type="PANTHER" id="PTHR43717">
    <property type="entry name" value="ANAEROBIC NITRIC OXIDE REDUCTASE FLAVORUBREDOXIN"/>
    <property type="match status" value="1"/>
</dbReference>
<dbReference type="PANTHER" id="PTHR43717:SF1">
    <property type="entry name" value="ANAEROBIC NITRIC OXIDE REDUCTASE FLAVORUBREDOXIN"/>
    <property type="match status" value="1"/>
</dbReference>
<dbReference type="Pfam" id="PF00258">
    <property type="entry name" value="Flavodoxin_1"/>
    <property type="match status" value="1"/>
</dbReference>
<dbReference type="Pfam" id="PF19583">
    <property type="entry name" value="ODP"/>
    <property type="match status" value="1"/>
</dbReference>
<dbReference type="Pfam" id="PF00301">
    <property type="entry name" value="Rubredoxin"/>
    <property type="match status" value="1"/>
</dbReference>
<dbReference type="PIRSF" id="PIRSF005243">
    <property type="entry name" value="ROO"/>
    <property type="match status" value="1"/>
</dbReference>
<dbReference type="PRINTS" id="PR00163">
    <property type="entry name" value="RUBREDOXIN"/>
</dbReference>
<dbReference type="SMART" id="SM00849">
    <property type="entry name" value="Lactamase_B"/>
    <property type="match status" value="1"/>
</dbReference>
<dbReference type="SUPFAM" id="SSF52218">
    <property type="entry name" value="Flavoproteins"/>
    <property type="match status" value="1"/>
</dbReference>
<dbReference type="SUPFAM" id="SSF56281">
    <property type="entry name" value="Metallo-hydrolase/oxidoreductase"/>
    <property type="match status" value="1"/>
</dbReference>
<dbReference type="SUPFAM" id="SSF57802">
    <property type="entry name" value="Rubredoxin-like"/>
    <property type="match status" value="1"/>
</dbReference>
<dbReference type="PROSITE" id="PS50902">
    <property type="entry name" value="FLAVODOXIN_LIKE"/>
    <property type="match status" value="1"/>
</dbReference>
<dbReference type="PROSITE" id="PS50903">
    <property type="entry name" value="RUBREDOXIN_LIKE"/>
    <property type="match status" value="1"/>
</dbReference>
<sequence>MSILVKNNIHWVGQRDWEVRDFHGTEYKTLRGSSYNSYLIREEKNVLIDTVDHKFSREFVQNLRSEIDLADIDYIIINHAEEDHAGALTELMAQIPDTPIYCTANAIDSINGHHHHPEWNFKVVKTGDTLDIGNGKQLIFVETPMLHWPDSMMTYMTGDAVLFSNDAFGQHYCDERLFNDEVDQTELFEQCQRYYANILTPFSRLVTPKITEILGFNLPVDMIATSHGVVWRDNPTQIVELYLKWTADYQEDRITIFYDTMSNNTRMMADAIAQGINEVDPNVAVKIFNVARSDKNEILTNVFRSKGVLVGTSTMNNVMMPKIAGLVEEMTGLRFRNKRASAFGSHGWSGGAVDRLSTRLQDAGFEMSLSLKAKWRPDLDALELCRQHGRDIARQWALAPLPETTQKTAPAEEITTCAAADLGPKMQCSVCQWIYDPALGEPLQDVAPGTPWSEVPDNFLCPECSLGKDVFDVLATEAK</sequence>
<name>NORV_SALPA</name>
<proteinExistence type="inferred from homology"/>
<evidence type="ECO:0000255" key="1">
    <source>
        <dbReference type="HAMAP-Rule" id="MF_01312"/>
    </source>
</evidence>
<reference key="1">
    <citation type="journal article" date="2004" name="Nat. Genet.">
        <title>Comparison of genome degradation in Paratyphi A and Typhi, human-restricted serovars of Salmonella enterica that cause typhoid.</title>
        <authorList>
            <person name="McClelland M."/>
            <person name="Sanderson K.E."/>
            <person name="Clifton S.W."/>
            <person name="Latreille P."/>
            <person name="Porwollik S."/>
            <person name="Sabo A."/>
            <person name="Meyer R."/>
            <person name="Bieri T."/>
            <person name="Ozersky P."/>
            <person name="McLellan M."/>
            <person name="Harkins C.R."/>
            <person name="Wang C."/>
            <person name="Nguyen C."/>
            <person name="Berghoff A."/>
            <person name="Elliott G."/>
            <person name="Kohlberg S."/>
            <person name="Strong C."/>
            <person name="Du F."/>
            <person name="Carter J."/>
            <person name="Kremizki C."/>
            <person name="Layman D."/>
            <person name="Leonard S."/>
            <person name="Sun H."/>
            <person name="Fulton L."/>
            <person name="Nash W."/>
            <person name="Miner T."/>
            <person name="Minx P."/>
            <person name="Delehaunty K."/>
            <person name="Fronick C."/>
            <person name="Magrini V."/>
            <person name="Nhan M."/>
            <person name="Warren W."/>
            <person name="Florea L."/>
            <person name="Spieth J."/>
            <person name="Wilson R.K."/>
        </authorList>
    </citation>
    <scope>NUCLEOTIDE SEQUENCE [LARGE SCALE GENOMIC DNA]</scope>
    <source>
        <strain>ATCC 9150 / SARB42</strain>
    </source>
</reference>
<accession>Q5PF19</accession>
<keyword id="KW-0963">Cytoplasm</keyword>
<keyword id="KW-0249">Electron transport</keyword>
<keyword id="KW-0285">Flavoprotein</keyword>
<keyword id="KW-0288">FMN</keyword>
<keyword id="KW-0408">Iron</keyword>
<keyword id="KW-0479">Metal-binding</keyword>
<keyword id="KW-0560">Oxidoreductase</keyword>
<keyword id="KW-0813">Transport</keyword>
<protein>
    <recommendedName>
        <fullName evidence="1">Anaerobic nitric oxide reductase flavorubredoxin</fullName>
        <shortName evidence="1">FlRd</shortName>
        <shortName evidence="1">FlavoRb</shortName>
    </recommendedName>
</protein>
<gene>
    <name evidence="1" type="primary">norV</name>
    <name evidence="1" type="synonym">flrD</name>
    <name type="ordered locus">SPA2698</name>
</gene>
<feature type="chain" id="PRO_0000305596" description="Anaerobic nitric oxide reductase flavorubredoxin">
    <location>
        <begin position="1"/>
        <end position="479"/>
    </location>
</feature>
<feature type="domain" description="Flavodoxin-like" evidence="1">
    <location>
        <begin position="254"/>
        <end position="393"/>
    </location>
</feature>
<feature type="domain" description="Rubredoxin-like" evidence="1">
    <location>
        <begin position="423"/>
        <end position="474"/>
    </location>
</feature>
<feature type="region of interest" description="Zinc metallo-hydrolase">
    <location>
        <begin position="30"/>
        <end position="210"/>
    </location>
</feature>
<feature type="binding site" evidence="1">
    <location>
        <position position="79"/>
    </location>
    <ligand>
        <name>Fe cation</name>
        <dbReference type="ChEBI" id="CHEBI:24875"/>
        <label>1</label>
    </ligand>
</feature>
<feature type="binding site" evidence="1">
    <location>
        <position position="81"/>
    </location>
    <ligand>
        <name>Fe cation</name>
        <dbReference type="ChEBI" id="CHEBI:24875"/>
        <label>1</label>
    </ligand>
</feature>
<feature type="binding site" evidence="1">
    <location>
        <position position="83"/>
    </location>
    <ligand>
        <name>Fe cation</name>
        <dbReference type="ChEBI" id="CHEBI:24875"/>
        <label>2</label>
    </ligand>
</feature>
<feature type="binding site" evidence="1">
    <location>
        <position position="147"/>
    </location>
    <ligand>
        <name>Fe cation</name>
        <dbReference type="ChEBI" id="CHEBI:24875"/>
        <label>1</label>
    </ligand>
</feature>
<feature type="binding site" evidence="1">
    <location>
        <position position="166"/>
    </location>
    <ligand>
        <name>Fe cation</name>
        <dbReference type="ChEBI" id="CHEBI:24875"/>
        <label>1</label>
    </ligand>
</feature>
<feature type="binding site" evidence="1">
    <location>
        <position position="166"/>
    </location>
    <ligand>
        <name>Fe cation</name>
        <dbReference type="ChEBI" id="CHEBI:24875"/>
        <label>2</label>
    </ligand>
</feature>
<feature type="binding site" evidence="1">
    <location>
        <position position="227"/>
    </location>
    <ligand>
        <name>Fe cation</name>
        <dbReference type="ChEBI" id="CHEBI:24875"/>
        <label>2</label>
    </ligand>
</feature>
<feature type="binding site" evidence="1">
    <location>
        <begin position="260"/>
        <end position="264"/>
    </location>
    <ligand>
        <name>FMN</name>
        <dbReference type="ChEBI" id="CHEBI:58210"/>
    </ligand>
</feature>
<feature type="binding site" evidence="1">
    <location>
        <begin position="342"/>
        <end position="369"/>
    </location>
    <ligand>
        <name>FMN</name>
        <dbReference type="ChEBI" id="CHEBI:58210"/>
    </ligand>
</feature>
<feature type="binding site" evidence="1">
    <location>
        <position position="428"/>
    </location>
    <ligand>
        <name>Fe cation</name>
        <dbReference type="ChEBI" id="CHEBI:24875"/>
        <label>3</label>
    </ligand>
</feature>
<feature type="binding site" evidence="1">
    <location>
        <position position="431"/>
    </location>
    <ligand>
        <name>Fe cation</name>
        <dbReference type="ChEBI" id="CHEBI:24875"/>
        <label>3</label>
    </ligand>
</feature>
<feature type="binding site" evidence="1">
    <location>
        <position position="461"/>
    </location>
    <ligand>
        <name>Fe cation</name>
        <dbReference type="ChEBI" id="CHEBI:24875"/>
        <label>3</label>
    </ligand>
</feature>
<feature type="binding site" evidence="1">
    <location>
        <position position="464"/>
    </location>
    <ligand>
        <name>Fe cation</name>
        <dbReference type="ChEBI" id="CHEBI:24875"/>
        <label>3</label>
    </ligand>
</feature>
<organism>
    <name type="scientific">Salmonella paratyphi A (strain ATCC 9150 / SARB42)</name>
    <dbReference type="NCBI Taxonomy" id="295319"/>
    <lineage>
        <taxon>Bacteria</taxon>
        <taxon>Pseudomonadati</taxon>
        <taxon>Pseudomonadota</taxon>
        <taxon>Gammaproteobacteria</taxon>
        <taxon>Enterobacterales</taxon>
        <taxon>Enterobacteriaceae</taxon>
        <taxon>Salmonella</taxon>
    </lineage>
</organism>